<proteinExistence type="evidence at transcript level"/>
<name>VEGFA_PIG</name>
<protein>
    <recommendedName>
        <fullName>Vascular endothelial growth factor A</fullName>
        <shortName>VEGF-A</shortName>
    </recommendedName>
    <alternativeName>
        <fullName>Vascular permeability factor</fullName>
        <shortName>VPF</shortName>
    </alternativeName>
</protein>
<evidence type="ECO:0000250" key="1"/>
<evidence type="ECO:0000250" key="2">
    <source>
        <dbReference type="UniProtKB" id="P15692"/>
    </source>
</evidence>
<evidence type="ECO:0000250" key="3">
    <source>
        <dbReference type="UniProtKB" id="P16612"/>
    </source>
</evidence>
<evidence type="ECO:0000250" key="4">
    <source>
        <dbReference type="UniProtKB" id="Q00731"/>
    </source>
</evidence>
<evidence type="ECO:0000255" key="5"/>
<evidence type="ECO:0000305" key="6"/>
<sequence>MNFLLSWVHWSLALLLYLHHAKWSQAAPMAEGDQKPHEVVKFMDVYQRSYCRPIETLVDIFQEYPDEIEYIFKPSCVPLMRCGGCCNDEGLECVPTEEFNITMQIMRIKPHQGQHIGEMSFLQHNKCECRPKKDRARQENPCGPCSERRKHLFVQDPQTCKCSCKNTDSRCKARQLELNERTCRCDKPRR</sequence>
<feature type="signal peptide" evidence="5">
    <location>
        <begin position="1"/>
        <end position="26"/>
    </location>
</feature>
<feature type="chain" id="PRO_0000023389" description="Vascular endothelial growth factor A">
    <location>
        <begin position="27"/>
        <end position="190"/>
    </location>
</feature>
<feature type="glycosylation site" description="N-linked (GlcNAc...) asparagine" evidence="5">
    <location>
        <position position="100"/>
    </location>
</feature>
<feature type="disulfide bond" evidence="1">
    <location>
        <begin position="51"/>
        <end position="93"/>
    </location>
</feature>
<feature type="disulfide bond" description="Interchain" evidence="1">
    <location>
        <position position="76"/>
    </location>
</feature>
<feature type="disulfide bond" evidence="1">
    <location>
        <begin position="82"/>
        <end position="127"/>
    </location>
</feature>
<feature type="disulfide bond" description="Interchain" evidence="1">
    <location>
        <position position="85"/>
    </location>
</feature>
<feature type="disulfide bond" evidence="1">
    <location>
        <begin position="86"/>
        <end position="129"/>
    </location>
</feature>
<feature type="sequence conflict" description="In Ref. 2; AAG33064." evidence="6" ref="2">
    <original>T</original>
    <variation>A</variation>
    <location>
        <position position="102"/>
    </location>
</feature>
<accession>P49151</accession>
<accession>Q9GL52</accession>
<reference key="1">
    <citation type="journal article" date="1995" name="Biochim. Biophys. Acta">
        <title>Nucleotide sequence and expression of the porcine vascular endothelial growth factor.</title>
        <authorList>
            <person name="Sharma H.S."/>
            <person name="Tang Z.H."/>
            <person name="Gho B.C.H."/>
            <person name="Verdouw P.D."/>
        </authorList>
    </citation>
    <scope>NUCLEOTIDE SEQUENCE [MRNA]</scope>
    <source>
        <tissue>Heart</tissue>
    </source>
</reference>
<reference key="2">
    <citation type="submission" date="2000-11" db="EMBL/GenBank/DDBJ databases">
        <title>PCR cloning of porcine cardiac vascular endothelial growth factor gene.</title>
        <authorList>
            <person name="Lee T."/>
            <person name="Canty J.M."/>
        </authorList>
    </citation>
    <scope>NUCLEOTIDE SEQUENCE [MRNA]</scope>
</reference>
<dbReference type="EMBL" id="X81380">
    <property type="protein sequence ID" value="CAA57143.1"/>
    <property type="molecule type" value="mRNA"/>
</dbReference>
<dbReference type="EMBL" id="AF318502">
    <property type="protein sequence ID" value="AAG33064.1"/>
    <property type="molecule type" value="mRNA"/>
</dbReference>
<dbReference type="PIR" id="S52130">
    <property type="entry name" value="S52130"/>
</dbReference>
<dbReference type="RefSeq" id="NP_999249.2">
    <property type="nucleotide sequence ID" value="NM_214084.2"/>
</dbReference>
<dbReference type="BMRB" id="P49151"/>
<dbReference type="SMR" id="P49151"/>
<dbReference type="FunCoup" id="P49151">
    <property type="interactions" value="395"/>
</dbReference>
<dbReference type="STRING" id="9823.ENSSSCP00000054926"/>
<dbReference type="GlyCosmos" id="P49151">
    <property type="glycosylation" value="1 site, No reported glycans"/>
</dbReference>
<dbReference type="GlyGen" id="P49151">
    <property type="glycosylation" value="1 site"/>
</dbReference>
<dbReference type="PaxDb" id="9823-ENSSSCP00000001845"/>
<dbReference type="GeneID" id="397157"/>
<dbReference type="KEGG" id="ssc:397157"/>
<dbReference type="CTD" id="7422"/>
<dbReference type="eggNOG" id="ENOG502QVI8">
    <property type="taxonomic scope" value="Eukaryota"/>
</dbReference>
<dbReference type="HOGENOM" id="CLU_042996_2_0_1"/>
<dbReference type="InParanoid" id="P49151"/>
<dbReference type="OrthoDB" id="6370328at2759"/>
<dbReference type="TreeFam" id="TF319554"/>
<dbReference type="Proteomes" id="UP000008227">
    <property type="component" value="Unplaced"/>
</dbReference>
<dbReference type="Proteomes" id="UP000314985">
    <property type="component" value="Unplaced"/>
</dbReference>
<dbReference type="Proteomes" id="UP000694570">
    <property type="component" value="Unplaced"/>
</dbReference>
<dbReference type="Proteomes" id="UP000694571">
    <property type="component" value="Unplaced"/>
</dbReference>
<dbReference type="Proteomes" id="UP000694720">
    <property type="component" value="Unplaced"/>
</dbReference>
<dbReference type="Proteomes" id="UP000694722">
    <property type="component" value="Unplaced"/>
</dbReference>
<dbReference type="Proteomes" id="UP000694723">
    <property type="component" value="Unplaced"/>
</dbReference>
<dbReference type="Proteomes" id="UP000694724">
    <property type="component" value="Unplaced"/>
</dbReference>
<dbReference type="Proteomes" id="UP000694725">
    <property type="component" value="Unplaced"/>
</dbReference>
<dbReference type="Proteomes" id="UP000694726">
    <property type="component" value="Unplaced"/>
</dbReference>
<dbReference type="Proteomes" id="UP000694727">
    <property type="component" value="Unplaced"/>
</dbReference>
<dbReference type="Proteomes" id="UP000694728">
    <property type="component" value="Unplaced"/>
</dbReference>
<dbReference type="GO" id="GO:0009986">
    <property type="term" value="C:cell surface"/>
    <property type="evidence" value="ECO:0000250"/>
    <property type="project" value="UniProtKB"/>
</dbReference>
<dbReference type="GO" id="GO:0005737">
    <property type="term" value="C:cytoplasm"/>
    <property type="evidence" value="ECO:0000250"/>
    <property type="project" value="UniProtKB"/>
</dbReference>
<dbReference type="GO" id="GO:0005615">
    <property type="term" value="C:extracellular space"/>
    <property type="evidence" value="ECO:0000250"/>
    <property type="project" value="UniProtKB"/>
</dbReference>
<dbReference type="GO" id="GO:0016020">
    <property type="term" value="C:membrane"/>
    <property type="evidence" value="ECO:0007669"/>
    <property type="project" value="InterPro"/>
</dbReference>
<dbReference type="GO" id="GO:0030141">
    <property type="term" value="C:secretory granule"/>
    <property type="evidence" value="ECO:0000250"/>
    <property type="project" value="UniProtKB"/>
</dbReference>
<dbReference type="GO" id="GO:0042056">
    <property type="term" value="F:chemoattractant activity"/>
    <property type="evidence" value="ECO:0000250"/>
    <property type="project" value="UniProtKB"/>
</dbReference>
<dbReference type="GO" id="GO:0005125">
    <property type="term" value="F:cytokine activity"/>
    <property type="evidence" value="ECO:0000250"/>
    <property type="project" value="UniProtKB"/>
</dbReference>
<dbReference type="GO" id="GO:0001968">
    <property type="term" value="F:fibronectin binding"/>
    <property type="evidence" value="ECO:0000250"/>
    <property type="project" value="UniProtKB"/>
</dbReference>
<dbReference type="GO" id="GO:0008083">
    <property type="term" value="F:growth factor activity"/>
    <property type="evidence" value="ECO:0000250"/>
    <property type="project" value="UniProtKB"/>
</dbReference>
<dbReference type="GO" id="GO:0008201">
    <property type="term" value="F:heparin binding"/>
    <property type="evidence" value="ECO:0000250"/>
    <property type="project" value="UniProtKB"/>
</dbReference>
<dbReference type="GO" id="GO:0005161">
    <property type="term" value="F:platelet-derived growth factor receptor binding"/>
    <property type="evidence" value="ECO:0000250"/>
    <property type="project" value="UniProtKB"/>
</dbReference>
<dbReference type="GO" id="GO:0048018">
    <property type="term" value="F:receptor ligand activity"/>
    <property type="evidence" value="ECO:0000250"/>
    <property type="project" value="UniProtKB"/>
</dbReference>
<dbReference type="GO" id="GO:0043183">
    <property type="term" value="F:vascular endothelial growth factor receptor 1 binding"/>
    <property type="evidence" value="ECO:0000250"/>
    <property type="project" value="UniProtKB"/>
</dbReference>
<dbReference type="GO" id="GO:0043184">
    <property type="term" value="F:vascular endothelial growth factor receptor 2 binding"/>
    <property type="evidence" value="ECO:0000250"/>
    <property type="project" value="UniProtKB"/>
</dbReference>
<dbReference type="GO" id="GO:0005172">
    <property type="term" value="F:vascular endothelial growth factor receptor binding"/>
    <property type="evidence" value="ECO:0000250"/>
    <property type="project" value="UniProtKB"/>
</dbReference>
<dbReference type="GO" id="GO:0001525">
    <property type="term" value="P:angiogenesis"/>
    <property type="evidence" value="ECO:0000250"/>
    <property type="project" value="UniProtKB"/>
</dbReference>
<dbReference type="GO" id="GO:0002042">
    <property type="term" value="P:cell migration involved in sprouting angiogenesis"/>
    <property type="evidence" value="ECO:0000250"/>
    <property type="project" value="BHF-UCL"/>
</dbReference>
<dbReference type="GO" id="GO:0071456">
    <property type="term" value="P:cellular response to hypoxia"/>
    <property type="evidence" value="ECO:0000250"/>
    <property type="project" value="UniProtKB"/>
</dbReference>
<dbReference type="GO" id="GO:0035767">
    <property type="term" value="P:endothelial cell chemotaxis"/>
    <property type="evidence" value="ECO:0000250"/>
    <property type="project" value="UniProtKB"/>
</dbReference>
<dbReference type="GO" id="GO:0050930">
    <property type="term" value="P:induction of positive chemotaxis"/>
    <property type="evidence" value="ECO:0000318"/>
    <property type="project" value="GO_Central"/>
</dbReference>
<dbReference type="GO" id="GO:0030225">
    <property type="term" value="P:macrophage differentiation"/>
    <property type="evidence" value="ECO:0000250"/>
    <property type="project" value="UniProtKB"/>
</dbReference>
<dbReference type="GO" id="GO:0030224">
    <property type="term" value="P:monocyte differentiation"/>
    <property type="evidence" value="ECO:0000250"/>
    <property type="project" value="UniProtKB"/>
</dbReference>
<dbReference type="GO" id="GO:0097475">
    <property type="term" value="P:motor neuron migration"/>
    <property type="evidence" value="ECO:0000250"/>
    <property type="project" value="UniProtKB"/>
</dbReference>
<dbReference type="GO" id="GO:0043066">
    <property type="term" value="P:negative regulation of apoptotic process"/>
    <property type="evidence" value="ECO:0000250"/>
    <property type="project" value="UniProtKB"/>
</dbReference>
<dbReference type="GO" id="GO:0007200">
    <property type="term" value="P:phospholipase C-activating G protein-coupled receptor signaling pathway"/>
    <property type="evidence" value="ECO:0000250"/>
    <property type="project" value="UniProtKB"/>
</dbReference>
<dbReference type="GO" id="GO:0050918">
    <property type="term" value="P:positive chemotaxis"/>
    <property type="evidence" value="ECO:0000250"/>
    <property type="project" value="BHF-UCL"/>
</dbReference>
<dbReference type="GO" id="GO:0045766">
    <property type="term" value="P:positive regulation of angiogenesis"/>
    <property type="evidence" value="ECO:0000250"/>
    <property type="project" value="UniProtKB"/>
</dbReference>
<dbReference type="GO" id="GO:0043536">
    <property type="term" value="P:positive regulation of blood vessel endothelial cell migration"/>
    <property type="evidence" value="ECO:0000250"/>
    <property type="project" value="UniProtKB"/>
</dbReference>
<dbReference type="GO" id="GO:0045785">
    <property type="term" value="P:positive regulation of cell adhesion"/>
    <property type="evidence" value="ECO:0000250"/>
    <property type="project" value="UniProtKB"/>
</dbReference>
<dbReference type="GO" id="GO:0051781">
    <property type="term" value="P:positive regulation of cell division"/>
    <property type="evidence" value="ECO:0007669"/>
    <property type="project" value="UniProtKB-KW"/>
</dbReference>
<dbReference type="GO" id="GO:0090050">
    <property type="term" value="P:positive regulation of cell migration involved in sprouting angiogenesis"/>
    <property type="evidence" value="ECO:0000250"/>
    <property type="project" value="UniProtKB"/>
</dbReference>
<dbReference type="GO" id="GO:0008284">
    <property type="term" value="P:positive regulation of cell population proliferation"/>
    <property type="evidence" value="ECO:0000250"/>
    <property type="project" value="UniProtKB"/>
</dbReference>
<dbReference type="GO" id="GO:0038091">
    <property type="term" value="P:positive regulation of cell proliferation by VEGF-activated platelet derived growth factor receptor signaling pathway"/>
    <property type="evidence" value="ECO:0000250"/>
    <property type="project" value="UniProtKB"/>
</dbReference>
<dbReference type="GO" id="GO:0010595">
    <property type="term" value="P:positive regulation of endothelial cell migration"/>
    <property type="evidence" value="ECO:0000250"/>
    <property type="project" value="UniProtKB"/>
</dbReference>
<dbReference type="GO" id="GO:0001938">
    <property type="term" value="P:positive regulation of endothelial cell proliferation"/>
    <property type="evidence" value="ECO:0000250"/>
    <property type="project" value="UniProtKB"/>
</dbReference>
<dbReference type="GO" id="GO:0051894">
    <property type="term" value="P:positive regulation of focal adhesion assembly"/>
    <property type="evidence" value="ECO:0000250"/>
    <property type="project" value="UniProtKB"/>
</dbReference>
<dbReference type="GO" id="GO:0043410">
    <property type="term" value="P:positive regulation of MAPK cascade"/>
    <property type="evidence" value="ECO:0000250"/>
    <property type="project" value="UniProtKB"/>
</dbReference>
<dbReference type="GO" id="GO:0060754">
    <property type="term" value="P:positive regulation of mast cell chemotaxis"/>
    <property type="evidence" value="ECO:0000318"/>
    <property type="project" value="GO_Central"/>
</dbReference>
<dbReference type="GO" id="GO:0050731">
    <property type="term" value="P:positive regulation of peptidyl-tyrosine phosphorylation"/>
    <property type="evidence" value="ECO:0000250"/>
    <property type="project" value="UniProtKB"/>
</dbReference>
<dbReference type="GO" id="GO:0050927">
    <property type="term" value="P:positive regulation of positive chemotaxis"/>
    <property type="evidence" value="ECO:0000250"/>
    <property type="project" value="UniProtKB"/>
</dbReference>
<dbReference type="GO" id="GO:0001934">
    <property type="term" value="P:positive regulation of protein phosphorylation"/>
    <property type="evidence" value="ECO:0000250"/>
    <property type="project" value="UniProtKB"/>
</dbReference>
<dbReference type="GO" id="GO:0031334">
    <property type="term" value="P:positive regulation of protein-containing complex assembly"/>
    <property type="evidence" value="ECO:0000250"/>
    <property type="project" value="UniProtKB"/>
</dbReference>
<dbReference type="GO" id="GO:0002092">
    <property type="term" value="P:positive regulation of receptor internalization"/>
    <property type="evidence" value="ECO:0000250"/>
    <property type="project" value="BHF-UCL"/>
</dbReference>
<dbReference type="GO" id="GO:0045944">
    <property type="term" value="P:positive regulation of transcription by RNA polymerase II"/>
    <property type="evidence" value="ECO:0000250"/>
    <property type="project" value="UniProtKB"/>
</dbReference>
<dbReference type="GO" id="GO:0008360">
    <property type="term" value="P:regulation of cell shape"/>
    <property type="evidence" value="ECO:0000250"/>
    <property type="project" value="UniProtKB"/>
</dbReference>
<dbReference type="GO" id="GO:0001666">
    <property type="term" value="P:response to hypoxia"/>
    <property type="evidence" value="ECO:0000250"/>
    <property type="project" value="UniProtKB"/>
</dbReference>
<dbReference type="GO" id="GO:0002040">
    <property type="term" value="P:sprouting angiogenesis"/>
    <property type="evidence" value="ECO:0000318"/>
    <property type="project" value="GO_Central"/>
</dbReference>
<dbReference type="GO" id="GO:0035148">
    <property type="term" value="P:tube formation"/>
    <property type="evidence" value="ECO:0000250"/>
    <property type="project" value="UniProtKB"/>
</dbReference>
<dbReference type="GO" id="GO:0048010">
    <property type="term" value="P:vascular endothelial growth factor receptor signaling pathway"/>
    <property type="evidence" value="ECO:0000250"/>
    <property type="project" value="UniProtKB"/>
</dbReference>
<dbReference type="GO" id="GO:0038084">
    <property type="term" value="P:vascular endothelial growth factor signaling pathway"/>
    <property type="evidence" value="ECO:0000318"/>
    <property type="project" value="GO_Central"/>
</dbReference>
<dbReference type="CDD" id="cd00135">
    <property type="entry name" value="PDGF"/>
    <property type="match status" value="1"/>
</dbReference>
<dbReference type="FunFam" id="2.10.160.10:FF:000001">
    <property type="entry name" value="Vascular endothelial growth factor A"/>
    <property type="match status" value="1"/>
</dbReference>
<dbReference type="FunFam" id="2.10.90.10:FF:000009">
    <property type="entry name" value="Vascular endothelial growth factor A"/>
    <property type="match status" value="1"/>
</dbReference>
<dbReference type="Gene3D" id="2.10.90.10">
    <property type="entry name" value="Cystine-knot cytokines"/>
    <property type="match status" value="1"/>
</dbReference>
<dbReference type="Gene3D" id="2.10.160.10">
    <property type="entry name" value="Vascular endothelial growth factor, heparin-binding domain"/>
    <property type="match status" value="1"/>
</dbReference>
<dbReference type="InterPro" id="IPR029034">
    <property type="entry name" value="Cystine-knot_cytokine"/>
</dbReference>
<dbReference type="InterPro" id="IPR023581">
    <property type="entry name" value="PD_growth_factor_CS"/>
</dbReference>
<dbReference type="InterPro" id="IPR000072">
    <property type="entry name" value="PDGF/VEGF_dom"/>
</dbReference>
<dbReference type="InterPro" id="IPR050507">
    <property type="entry name" value="PDGF/VEGF_growth_factor"/>
</dbReference>
<dbReference type="InterPro" id="IPR027928">
    <property type="entry name" value="VEGF_C"/>
</dbReference>
<dbReference type="InterPro" id="IPR036841">
    <property type="entry name" value="VEGF_C_sf"/>
</dbReference>
<dbReference type="PANTHER" id="PTHR12025">
    <property type="entry name" value="VASCULAR ENDOTHELIAL GROWTH FACTOR"/>
    <property type="match status" value="1"/>
</dbReference>
<dbReference type="PANTHER" id="PTHR12025:SF5">
    <property type="entry name" value="VASCULAR ENDOTHELIAL GROWTH FACTOR A, LONG FORM"/>
    <property type="match status" value="1"/>
</dbReference>
<dbReference type="Pfam" id="PF00341">
    <property type="entry name" value="PDGF"/>
    <property type="match status" value="1"/>
</dbReference>
<dbReference type="Pfam" id="PF14554">
    <property type="entry name" value="VEGF_C"/>
    <property type="match status" value="1"/>
</dbReference>
<dbReference type="SMART" id="SM00141">
    <property type="entry name" value="PDGF"/>
    <property type="match status" value="1"/>
</dbReference>
<dbReference type="SUPFAM" id="SSF57501">
    <property type="entry name" value="Cystine-knot cytokines"/>
    <property type="match status" value="1"/>
</dbReference>
<dbReference type="SUPFAM" id="SSF57593">
    <property type="entry name" value="Heparin-binding domain from vascular endothelial growth factor"/>
    <property type="match status" value="1"/>
</dbReference>
<dbReference type="PROSITE" id="PS00249">
    <property type="entry name" value="PDGF_1"/>
    <property type="match status" value="1"/>
</dbReference>
<dbReference type="PROSITE" id="PS50278">
    <property type="entry name" value="PDGF_2"/>
    <property type="match status" value="1"/>
</dbReference>
<keyword id="KW-0037">Angiogenesis</keyword>
<keyword id="KW-0217">Developmental protein</keyword>
<keyword id="KW-0221">Differentiation</keyword>
<keyword id="KW-1015">Disulfide bond</keyword>
<keyword id="KW-0325">Glycoprotein</keyword>
<keyword id="KW-0339">Growth factor</keyword>
<keyword id="KW-0358">Heparin-binding</keyword>
<keyword id="KW-0497">Mitogen</keyword>
<keyword id="KW-1185">Reference proteome</keyword>
<keyword id="KW-0964">Secreted</keyword>
<keyword id="KW-0732">Signal</keyword>
<comment type="function">
    <text evidence="2 4">Growth factor active in angiogenesis, vasculogenesis and endothelial cell growth. Induces endothelial cell proliferation, promotes cell migration, inhibits apoptosis and induces permeabilization of blood vessels. Binds to the FLT1/VEGFR1 and KDR/VEGFR2 receptors, heparan sulfate and heparin (By similarity). Binding to NRP1 receptor initiates a signaling pathway needed for motor neuron axon guidance and cell body migration, including for the caudal migration of facial motor neurons from rhombomere 4 to rhombomere 6 during embryonic development (By similarity). Also binds the DEAR/FBXW7-AS1 receptor (By similarity).</text>
</comment>
<comment type="subunit">
    <text evidence="2 3">Homodimer; disulfide-linked (By similarity). Also found as heterodimer with PGF (By similarity). Interacts with NRP1 (By similarity). Interacts with BSG (By similarity). Interacts with CD82; this interaction inhibits VEGFA-mediated signaling pathway (By similarity).</text>
</comment>
<comment type="subcellular location">
    <subcellularLocation>
        <location evidence="1">Secreted</location>
    </subcellularLocation>
    <text evidence="1">Secreted but remains associated to cells or to the extracellular matrix unless released by heparin.</text>
</comment>
<comment type="similarity">
    <text evidence="6">Belongs to the PDGF/VEGF growth factor family.</text>
</comment>
<gene>
    <name type="primary">VEGFA</name>
    <name type="synonym">VEGF</name>
</gene>
<organism>
    <name type="scientific">Sus scrofa</name>
    <name type="common">Pig</name>
    <dbReference type="NCBI Taxonomy" id="9823"/>
    <lineage>
        <taxon>Eukaryota</taxon>
        <taxon>Metazoa</taxon>
        <taxon>Chordata</taxon>
        <taxon>Craniata</taxon>
        <taxon>Vertebrata</taxon>
        <taxon>Euteleostomi</taxon>
        <taxon>Mammalia</taxon>
        <taxon>Eutheria</taxon>
        <taxon>Laurasiatheria</taxon>
        <taxon>Artiodactyla</taxon>
        <taxon>Suina</taxon>
        <taxon>Suidae</taxon>
        <taxon>Sus</taxon>
    </lineage>
</organism>